<feature type="chain" id="PRO_1000212234" description="tRNA (guanine-N(1)-)-methyltransferase">
    <location>
        <begin position="1"/>
        <end position="243"/>
    </location>
</feature>
<feature type="binding site" evidence="1">
    <location>
        <position position="108"/>
    </location>
    <ligand>
        <name>S-adenosyl-L-methionine</name>
        <dbReference type="ChEBI" id="CHEBI:59789"/>
    </ligand>
</feature>
<feature type="binding site" evidence="1">
    <location>
        <begin position="127"/>
        <end position="132"/>
    </location>
    <ligand>
        <name>S-adenosyl-L-methionine</name>
        <dbReference type="ChEBI" id="CHEBI:59789"/>
    </ligand>
</feature>
<reference key="1">
    <citation type="journal article" date="2009" name="PLoS Pathog.">
        <title>Genomic evidence for the evolution of Streptococcus equi: host restriction, increased virulence, and genetic exchange with human pathogens.</title>
        <authorList>
            <person name="Holden M.T.G."/>
            <person name="Heather Z."/>
            <person name="Paillot R."/>
            <person name="Steward K.F."/>
            <person name="Webb K."/>
            <person name="Ainslie F."/>
            <person name="Jourdan T."/>
            <person name="Bason N.C."/>
            <person name="Holroyd N.E."/>
            <person name="Mungall K."/>
            <person name="Quail M.A."/>
            <person name="Sanders M."/>
            <person name="Simmonds M."/>
            <person name="Willey D."/>
            <person name="Brooks K."/>
            <person name="Aanensen D.M."/>
            <person name="Spratt B.G."/>
            <person name="Jolley K.A."/>
            <person name="Maiden M.C.J."/>
            <person name="Kehoe M."/>
            <person name="Chanter N."/>
            <person name="Bentley S.D."/>
            <person name="Robinson C."/>
            <person name="Maskell D.J."/>
            <person name="Parkhill J."/>
            <person name="Waller A.S."/>
        </authorList>
    </citation>
    <scope>NUCLEOTIDE SEQUENCE [LARGE SCALE GENOMIC DNA]</scope>
    <source>
        <strain>H70</strain>
    </source>
</reference>
<sequence length="243" mass="27918">MKIDILTLFPEMFAPLEHSIVGKAKEKGLLDIHYHNFRDHAEKARHVDDEPYGGGQGMLLRAQPIFDTMDSIQATKPRVILLDPAGKPFHQSYAEELALEEELIFICGHYEGYDERIKTLVTDEISLGDFVLTGGELAAMTMIDATVRLIPNVLGKQASHQEDSFSSGLLEYPQYTRPYDYRGMKVPDVLMSGHHEHIRLWRMEQSLKKTYLRRPDLLETYDFSDEERRIFDSIKSELSEGEN</sequence>
<gene>
    <name evidence="1" type="primary">trmD</name>
    <name type="ordered locus">SZO_08600</name>
</gene>
<proteinExistence type="inferred from homology"/>
<evidence type="ECO:0000255" key="1">
    <source>
        <dbReference type="HAMAP-Rule" id="MF_00605"/>
    </source>
</evidence>
<keyword id="KW-0963">Cytoplasm</keyword>
<keyword id="KW-0489">Methyltransferase</keyword>
<keyword id="KW-0949">S-adenosyl-L-methionine</keyword>
<keyword id="KW-0808">Transferase</keyword>
<keyword id="KW-0819">tRNA processing</keyword>
<protein>
    <recommendedName>
        <fullName evidence="1">tRNA (guanine-N(1)-)-methyltransferase</fullName>
        <ecNumber evidence="1">2.1.1.228</ecNumber>
    </recommendedName>
    <alternativeName>
        <fullName evidence="1">M1G-methyltransferase</fullName>
    </alternativeName>
    <alternativeName>
        <fullName evidence="1">tRNA [GM37] methyltransferase</fullName>
    </alternativeName>
</protein>
<name>TRMD_STRS7</name>
<accession>C0MEI3</accession>
<organism>
    <name type="scientific">Streptococcus equi subsp. zooepidemicus (strain H70)</name>
    <dbReference type="NCBI Taxonomy" id="553483"/>
    <lineage>
        <taxon>Bacteria</taxon>
        <taxon>Bacillati</taxon>
        <taxon>Bacillota</taxon>
        <taxon>Bacilli</taxon>
        <taxon>Lactobacillales</taxon>
        <taxon>Streptococcaceae</taxon>
        <taxon>Streptococcus</taxon>
    </lineage>
</organism>
<dbReference type="EC" id="2.1.1.228" evidence="1"/>
<dbReference type="EMBL" id="FM204884">
    <property type="protein sequence ID" value="CAW99065.1"/>
    <property type="molecule type" value="Genomic_DNA"/>
</dbReference>
<dbReference type="SMR" id="C0MEI3"/>
<dbReference type="KEGG" id="seq:SZO_08600"/>
<dbReference type="eggNOG" id="COG0336">
    <property type="taxonomic scope" value="Bacteria"/>
</dbReference>
<dbReference type="HOGENOM" id="CLU_047363_0_1_9"/>
<dbReference type="Proteomes" id="UP000001368">
    <property type="component" value="Chromosome"/>
</dbReference>
<dbReference type="GO" id="GO:0005829">
    <property type="term" value="C:cytosol"/>
    <property type="evidence" value="ECO:0007669"/>
    <property type="project" value="TreeGrafter"/>
</dbReference>
<dbReference type="GO" id="GO:0052906">
    <property type="term" value="F:tRNA (guanine(37)-N1)-methyltransferase activity"/>
    <property type="evidence" value="ECO:0007669"/>
    <property type="project" value="UniProtKB-UniRule"/>
</dbReference>
<dbReference type="GO" id="GO:0002939">
    <property type="term" value="P:tRNA N1-guanine methylation"/>
    <property type="evidence" value="ECO:0007669"/>
    <property type="project" value="TreeGrafter"/>
</dbReference>
<dbReference type="CDD" id="cd18080">
    <property type="entry name" value="TrmD-like"/>
    <property type="match status" value="1"/>
</dbReference>
<dbReference type="FunFam" id="1.10.1270.20:FF:000001">
    <property type="entry name" value="tRNA (guanine-N(1)-)-methyltransferase"/>
    <property type="match status" value="1"/>
</dbReference>
<dbReference type="FunFam" id="3.40.1280.10:FF:000001">
    <property type="entry name" value="tRNA (guanine-N(1)-)-methyltransferase"/>
    <property type="match status" value="1"/>
</dbReference>
<dbReference type="Gene3D" id="3.40.1280.10">
    <property type="match status" value="1"/>
</dbReference>
<dbReference type="Gene3D" id="1.10.1270.20">
    <property type="entry name" value="tRNA(m1g37)methyltransferase, domain 2"/>
    <property type="match status" value="1"/>
</dbReference>
<dbReference type="HAMAP" id="MF_00605">
    <property type="entry name" value="TrmD"/>
    <property type="match status" value="1"/>
</dbReference>
<dbReference type="InterPro" id="IPR029028">
    <property type="entry name" value="Alpha/beta_knot_MTases"/>
</dbReference>
<dbReference type="InterPro" id="IPR023148">
    <property type="entry name" value="tRNA_m1G_MeTrfase_C_sf"/>
</dbReference>
<dbReference type="InterPro" id="IPR002649">
    <property type="entry name" value="tRNA_m1G_MeTrfase_TrmD"/>
</dbReference>
<dbReference type="InterPro" id="IPR029026">
    <property type="entry name" value="tRNA_m1G_MTases_N"/>
</dbReference>
<dbReference type="InterPro" id="IPR016009">
    <property type="entry name" value="tRNA_MeTrfase_TRMD/TRM10"/>
</dbReference>
<dbReference type="NCBIfam" id="NF000648">
    <property type="entry name" value="PRK00026.1"/>
    <property type="match status" value="1"/>
</dbReference>
<dbReference type="NCBIfam" id="TIGR00088">
    <property type="entry name" value="trmD"/>
    <property type="match status" value="1"/>
</dbReference>
<dbReference type="PANTHER" id="PTHR46417">
    <property type="entry name" value="TRNA (GUANINE-N(1)-)-METHYLTRANSFERASE"/>
    <property type="match status" value="1"/>
</dbReference>
<dbReference type="PANTHER" id="PTHR46417:SF1">
    <property type="entry name" value="TRNA (GUANINE-N(1)-)-METHYLTRANSFERASE"/>
    <property type="match status" value="1"/>
</dbReference>
<dbReference type="Pfam" id="PF01746">
    <property type="entry name" value="tRNA_m1G_MT"/>
    <property type="match status" value="1"/>
</dbReference>
<dbReference type="PIRSF" id="PIRSF000386">
    <property type="entry name" value="tRNA_mtase"/>
    <property type="match status" value="1"/>
</dbReference>
<dbReference type="SUPFAM" id="SSF75217">
    <property type="entry name" value="alpha/beta knot"/>
    <property type="match status" value="1"/>
</dbReference>
<comment type="function">
    <text evidence="1">Specifically methylates guanosine-37 in various tRNAs.</text>
</comment>
<comment type="catalytic activity">
    <reaction evidence="1">
        <text>guanosine(37) in tRNA + S-adenosyl-L-methionine = N(1)-methylguanosine(37) in tRNA + S-adenosyl-L-homocysteine + H(+)</text>
        <dbReference type="Rhea" id="RHEA:36899"/>
        <dbReference type="Rhea" id="RHEA-COMP:10145"/>
        <dbReference type="Rhea" id="RHEA-COMP:10147"/>
        <dbReference type="ChEBI" id="CHEBI:15378"/>
        <dbReference type="ChEBI" id="CHEBI:57856"/>
        <dbReference type="ChEBI" id="CHEBI:59789"/>
        <dbReference type="ChEBI" id="CHEBI:73542"/>
        <dbReference type="ChEBI" id="CHEBI:74269"/>
        <dbReference type="EC" id="2.1.1.228"/>
    </reaction>
</comment>
<comment type="subunit">
    <text evidence="1">Homodimer.</text>
</comment>
<comment type="subcellular location">
    <subcellularLocation>
        <location evidence="1">Cytoplasm</location>
    </subcellularLocation>
</comment>
<comment type="similarity">
    <text evidence="1">Belongs to the RNA methyltransferase TrmD family.</text>
</comment>